<proteinExistence type="inferred from homology"/>
<sequence length="165" mass="17475">MFKKLFGLGSKTNEETIVAPLTGAVKNIEEVPDPVFAGRMMGDGVAIDPTEGVVVSPVDGEIVQLFHTKHAIGIKAKNGTEILIHVGLETVKMEGEGFEAHVSEGQAVKAGDKLISFDLELIREKAKSTITPIVITNTDAAESIKTTVGVTATKGSTEVMKVTMK</sequence>
<dbReference type="EMBL" id="AE016879">
    <property type="protein sequence ID" value="AAP29206.1"/>
    <property type="molecule type" value="Genomic_DNA"/>
</dbReference>
<dbReference type="EMBL" id="AE017334">
    <property type="protein sequence ID" value="AAT34706.1"/>
    <property type="molecule type" value="Genomic_DNA"/>
</dbReference>
<dbReference type="EMBL" id="AE017225">
    <property type="protein sequence ID" value="AAT57458.1"/>
    <property type="molecule type" value="Genomic_DNA"/>
</dbReference>
<dbReference type="RefSeq" id="NP_847720.1">
    <property type="nucleotide sequence ID" value="NC_003997.3"/>
</dbReference>
<dbReference type="RefSeq" id="WP_000473666.1">
    <property type="nucleotide sequence ID" value="NZ_WXXJ01000038.1"/>
</dbReference>
<dbReference type="RefSeq" id="YP_031408.1">
    <property type="nucleotide sequence ID" value="NC_005945.1"/>
</dbReference>
<dbReference type="SMR" id="Q81JY0"/>
<dbReference type="STRING" id="261594.GBAA_5563"/>
<dbReference type="DNASU" id="1085250"/>
<dbReference type="KEGG" id="ban:BA_5563"/>
<dbReference type="KEGG" id="bar:GBAA_5563"/>
<dbReference type="KEGG" id="bat:BAS5169"/>
<dbReference type="PATRIC" id="fig|198094.11.peg.5522"/>
<dbReference type="eggNOG" id="COG2190">
    <property type="taxonomic scope" value="Bacteria"/>
</dbReference>
<dbReference type="HOGENOM" id="CLU_012312_5_3_9"/>
<dbReference type="OMA" id="KMVAPCD"/>
<dbReference type="OrthoDB" id="92465at2"/>
<dbReference type="Proteomes" id="UP000000427">
    <property type="component" value="Chromosome"/>
</dbReference>
<dbReference type="Proteomes" id="UP000000594">
    <property type="component" value="Chromosome"/>
</dbReference>
<dbReference type="GO" id="GO:0005737">
    <property type="term" value="C:cytoplasm"/>
    <property type="evidence" value="ECO:0007669"/>
    <property type="project" value="UniProtKB-SubCell"/>
</dbReference>
<dbReference type="GO" id="GO:0016301">
    <property type="term" value="F:kinase activity"/>
    <property type="evidence" value="ECO:0007669"/>
    <property type="project" value="UniProtKB-KW"/>
</dbReference>
<dbReference type="GO" id="GO:0046872">
    <property type="term" value="F:metal ion binding"/>
    <property type="evidence" value="ECO:0007669"/>
    <property type="project" value="UniProtKB-KW"/>
</dbReference>
<dbReference type="GO" id="GO:0009401">
    <property type="term" value="P:phosphoenolpyruvate-dependent sugar phosphotransferase system"/>
    <property type="evidence" value="ECO:0007669"/>
    <property type="project" value="UniProtKB-KW"/>
</dbReference>
<dbReference type="FunFam" id="2.70.70.10:FF:000001">
    <property type="entry name" value="PTS system glucose-specific IIA component"/>
    <property type="match status" value="1"/>
</dbReference>
<dbReference type="Gene3D" id="2.70.70.10">
    <property type="entry name" value="Glucose Permease (Domain IIA)"/>
    <property type="match status" value="1"/>
</dbReference>
<dbReference type="InterPro" id="IPR011055">
    <property type="entry name" value="Dup_hybrid_motif"/>
</dbReference>
<dbReference type="InterPro" id="IPR001127">
    <property type="entry name" value="PTS_EIIA_1_perm"/>
</dbReference>
<dbReference type="InterPro" id="IPR050890">
    <property type="entry name" value="PTS_EIIA_component"/>
</dbReference>
<dbReference type="NCBIfam" id="TIGR00830">
    <property type="entry name" value="PTBA"/>
    <property type="match status" value="1"/>
</dbReference>
<dbReference type="PANTHER" id="PTHR45008">
    <property type="entry name" value="PTS SYSTEM GLUCOSE-SPECIFIC EIIA COMPONENT"/>
    <property type="match status" value="1"/>
</dbReference>
<dbReference type="PANTHER" id="PTHR45008:SF1">
    <property type="entry name" value="PTS SYSTEM GLUCOSE-SPECIFIC EIIA COMPONENT"/>
    <property type="match status" value="1"/>
</dbReference>
<dbReference type="Pfam" id="PF00358">
    <property type="entry name" value="PTS_EIIA_1"/>
    <property type="match status" value="1"/>
</dbReference>
<dbReference type="SUPFAM" id="SSF51261">
    <property type="entry name" value="Duplicated hybrid motif"/>
    <property type="match status" value="1"/>
</dbReference>
<dbReference type="PROSITE" id="PS51093">
    <property type="entry name" value="PTS_EIIA_TYPE_1"/>
    <property type="match status" value="1"/>
</dbReference>
<dbReference type="PROSITE" id="PS00371">
    <property type="entry name" value="PTS_EIIA_TYPE_1_HIS"/>
    <property type="match status" value="1"/>
</dbReference>
<keyword id="KW-0963">Cytoplasm</keyword>
<keyword id="KW-0418">Kinase</keyword>
<keyword id="KW-0479">Metal-binding</keyword>
<keyword id="KW-0597">Phosphoprotein</keyword>
<keyword id="KW-0598">Phosphotransferase system</keyword>
<keyword id="KW-1185">Reference proteome</keyword>
<keyword id="KW-0762">Sugar transport</keyword>
<keyword id="KW-0808">Transferase</keyword>
<keyword id="KW-0813">Transport</keyword>
<keyword id="KW-0862">Zinc</keyword>
<gene>
    <name type="primary">crr</name>
    <name type="ordered locus">BA_5563</name>
    <name type="ordered locus">GBAA_5563</name>
    <name type="ordered locus">BAS5169</name>
</gene>
<feature type="chain" id="PRO_0000186543" description="PTS system glucose-specific EIIA component">
    <location>
        <begin position="1"/>
        <end position="165"/>
    </location>
</feature>
<feature type="domain" description="PTS EIIA type-1" evidence="2">
    <location>
        <begin position="33"/>
        <end position="137"/>
    </location>
</feature>
<feature type="active site" description="Tele-phosphohistidine intermediate; for EIIA activity" evidence="1 2">
    <location>
        <position position="85"/>
    </location>
</feature>
<feature type="binding site" evidence="1">
    <location>
        <position position="70"/>
    </location>
    <ligand>
        <name>Zn(2+)</name>
        <dbReference type="ChEBI" id="CHEBI:29105"/>
        <note>ligand shared with glycerol kinase</note>
    </ligand>
</feature>
<feature type="binding site" evidence="1">
    <location>
        <position position="85"/>
    </location>
    <ligand>
        <name>Zn(2+)</name>
        <dbReference type="ChEBI" id="CHEBI:29105"/>
        <note>ligand shared with glycerol kinase</note>
    </ligand>
</feature>
<feature type="site" description="Important for phospho-donor activity" evidence="1">
    <location>
        <position position="70"/>
    </location>
</feature>
<feature type="modified residue" description="Phosphohistidine; by HPr" evidence="1">
    <location>
        <position position="85"/>
    </location>
</feature>
<organism>
    <name type="scientific">Bacillus anthracis</name>
    <dbReference type="NCBI Taxonomy" id="1392"/>
    <lineage>
        <taxon>Bacteria</taxon>
        <taxon>Bacillati</taxon>
        <taxon>Bacillota</taxon>
        <taxon>Bacilli</taxon>
        <taxon>Bacillales</taxon>
        <taxon>Bacillaceae</taxon>
        <taxon>Bacillus</taxon>
        <taxon>Bacillus cereus group</taxon>
    </lineage>
</organism>
<evidence type="ECO:0000250" key="1">
    <source>
        <dbReference type="UniProtKB" id="P69783"/>
    </source>
</evidence>
<evidence type="ECO:0000255" key="2">
    <source>
        <dbReference type="PROSITE-ProRule" id="PRU00416"/>
    </source>
</evidence>
<evidence type="ECO:0000305" key="3"/>
<comment type="function">
    <text evidence="1">The phosphoenolpyruvate-dependent sugar phosphotransferase system (sugar PTS), a major carbohydrate active transport system, catalyzes the phosphorylation of incoming sugar substrates concomitantly with their translocation across the cell membrane. The enzyme II complex composed of PtsG and Crr is involved in glucose transport.</text>
</comment>
<comment type="cofactor">
    <cofactor evidence="1">
        <name>Zn(2+)</name>
        <dbReference type="ChEBI" id="CHEBI:29105"/>
    </cofactor>
    <text evidence="1">Binds 1 zinc ion per glycerol kinase EIIA-Glc dimer. The zinc ion is important for dimerization.</text>
</comment>
<comment type="subunit">
    <text evidence="1">Heterodimer with glycerol kinase (glpk).</text>
</comment>
<comment type="subcellular location">
    <subcellularLocation>
        <location evidence="3">Cytoplasm</location>
    </subcellularLocation>
</comment>
<comment type="domain">
    <text evidence="2">The EIIA domain is phosphorylated by phospho-HPr on a histidyl residue. Then, it transfers the phosphoryl group to the EIIB domain.</text>
</comment>
<name>PTGA_BACAN</name>
<protein>
    <recommendedName>
        <fullName evidence="1">PTS system glucose-specific EIIA component</fullName>
    </recommendedName>
    <alternativeName>
        <fullName evidence="1">EIIA-Glc</fullName>
    </alternativeName>
    <alternativeName>
        <fullName evidence="1">EIII-Glc</fullName>
    </alternativeName>
    <alternativeName>
        <fullName evidence="1">Glucose-specific phosphotransferase enzyme IIA component</fullName>
    </alternativeName>
</protein>
<reference key="1">
    <citation type="journal article" date="2003" name="Nature">
        <title>The genome sequence of Bacillus anthracis Ames and comparison to closely related bacteria.</title>
        <authorList>
            <person name="Read T.D."/>
            <person name="Peterson S.N."/>
            <person name="Tourasse N.J."/>
            <person name="Baillie L.W."/>
            <person name="Paulsen I.T."/>
            <person name="Nelson K.E."/>
            <person name="Tettelin H."/>
            <person name="Fouts D.E."/>
            <person name="Eisen J.A."/>
            <person name="Gill S.R."/>
            <person name="Holtzapple E.K."/>
            <person name="Okstad O.A."/>
            <person name="Helgason E."/>
            <person name="Rilstone J."/>
            <person name="Wu M."/>
            <person name="Kolonay J.F."/>
            <person name="Beanan M.J."/>
            <person name="Dodson R.J."/>
            <person name="Brinkac L.M."/>
            <person name="Gwinn M.L."/>
            <person name="DeBoy R.T."/>
            <person name="Madpu R."/>
            <person name="Daugherty S.C."/>
            <person name="Durkin A.S."/>
            <person name="Haft D.H."/>
            <person name="Nelson W.C."/>
            <person name="Peterson J.D."/>
            <person name="Pop M."/>
            <person name="Khouri H.M."/>
            <person name="Radune D."/>
            <person name="Benton J.L."/>
            <person name="Mahamoud Y."/>
            <person name="Jiang L."/>
            <person name="Hance I.R."/>
            <person name="Weidman J.F."/>
            <person name="Berry K.J."/>
            <person name="Plaut R.D."/>
            <person name="Wolf A.M."/>
            <person name="Watkins K.L."/>
            <person name="Nierman W.C."/>
            <person name="Hazen A."/>
            <person name="Cline R.T."/>
            <person name="Redmond C."/>
            <person name="Thwaite J.E."/>
            <person name="White O."/>
            <person name="Salzberg S.L."/>
            <person name="Thomason B."/>
            <person name="Friedlander A.M."/>
            <person name="Koehler T.M."/>
            <person name="Hanna P.C."/>
            <person name="Kolstoe A.-B."/>
            <person name="Fraser C.M."/>
        </authorList>
    </citation>
    <scope>NUCLEOTIDE SEQUENCE [LARGE SCALE GENOMIC DNA]</scope>
    <source>
        <strain>Ames / isolate Porton</strain>
    </source>
</reference>
<reference key="2">
    <citation type="journal article" date="2009" name="J. Bacteriol.">
        <title>The complete genome sequence of Bacillus anthracis Ames 'Ancestor'.</title>
        <authorList>
            <person name="Ravel J."/>
            <person name="Jiang L."/>
            <person name="Stanley S.T."/>
            <person name="Wilson M.R."/>
            <person name="Decker R.S."/>
            <person name="Read T.D."/>
            <person name="Worsham P."/>
            <person name="Keim P.S."/>
            <person name="Salzberg S.L."/>
            <person name="Fraser-Liggett C.M."/>
            <person name="Rasko D.A."/>
        </authorList>
    </citation>
    <scope>NUCLEOTIDE SEQUENCE [LARGE SCALE GENOMIC DNA]</scope>
    <source>
        <strain>Ames ancestor</strain>
    </source>
</reference>
<reference key="3">
    <citation type="submission" date="2004-01" db="EMBL/GenBank/DDBJ databases">
        <title>Complete genome sequence of Bacillus anthracis Sterne.</title>
        <authorList>
            <person name="Brettin T.S."/>
            <person name="Bruce D."/>
            <person name="Challacombe J.F."/>
            <person name="Gilna P."/>
            <person name="Han C."/>
            <person name="Hill K."/>
            <person name="Hitchcock P."/>
            <person name="Jackson P."/>
            <person name="Keim P."/>
            <person name="Longmire J."/>
            <person name="Lucas S."/>
            <person name="Okinaka R."/>
            <person name="Richardson P."/>
            <person name="Rubin E."/>
            <person name="Tice H."/>
        </authorList>
    </citation>
    <scope>NUCLEOTIDE SEQUENCE [LARGE SCALE GENOMIC DNA]</scope>
    <source>
        <strain>Sterne</strain>
    </source>
</reference>
<accession>Q81JY0</accession>
<accession>Q6HQI0</accession>
<accession>Q6KJV4</accession>